<dbReference type="EC" id="3.5.1.n3" evidence="1"/>
<dbReference type="EMBL" id="BA000021">
    <property type="protein sequence ID" value="BAC24307.1"/>
    <property type="molecule type" value="Genomic_DNA"/>
</dbReference>
<dbReference type="SMR" id="Q8D340"/>
<dbReference type="STRING" id="36870.gene:10368649"/>
<dbReference type="KEGG" id="wbr:b2256"/>
<dbReference type="eggNOG" id="COG0726">
    <property type="taxonomic scope" value="Bacteria"/>
</dbReference>
<dbReference type="HOGENOM" id="CLU_084199_0_0_6"/>
<dbReference type="OrthoDB" id="5589314at2"/>
<dbReference type="UniPathway" id="UPA00030"/>
<dbReference type="UniPathway" id="UPA00036">
    <property type="reaction ID" value="UER00496"/>
</dbReference>
<dbReference type="Proteomes" id="UP000000562">
    <property type="component" value="Chromosome"/>
</dbReference>
<dbReference type="GO" id="GO:0016020">
    <property type="term" value="C:membrane"/>
    <property type="evidence" value="ECO:0007669"/>
    <property type="project" value="GOC"/>
</dbReference>
<dbReference type="GO" id="GO:0016811">
    <property type="term" value="F:hydrolase activity, acting on carbon-nitrogen (but not peptide) bonds, in linear amides"/>
    <property type="evidence" value="ECO:0007669"/>
    <property type="project" value="UniProtKB-UniRule"/>
</dbReference>
<dbReference type="GO" id="GO:0036108">
    <property type="term" value="P:4-amino-4-deoxy-alpha-L-arabinopyranosyl undecaprenyl phosphate biosynthetic process"/>
    <property type="evidence" value="ECO:0007669"/>
    <property type="project" value="UniProtKB-UniRule"/>
</dbReference>
<dbReference type="GO" id="GO:0009245">
    <property type="term" value="P:lipid A biosynthetic process"/>
    <property type="evidence" value="ECO:0007669"/>
    <property type="project" value="UniProtKB-UniRule"/>
</dbReference>
<dbReference type="GO" id="GO:0009103">
    <property type="term" value="P:lipopolysaccharide biosynthetic process"/>
    <property type="evidence" value="ECO:0007669"/>
    <property type="project" value="UniProtKB-UniRule"/>
</dbReference>
<dbReference type="GO" id="GO:0046677">
    <property type="term" value="P:response to antibiotic"/>
    <property type="evidence" value="ECO:0007669"/>
    <property type="project" value="UniProtKB-KW"/>
</dbReference>
<dbReference type="Gene3D" id="3.20.20.370">
    <property type="entry name" value="Glycoside hydrolase/deacetylase"/>
    <property type="match status" value="1"/>
</dbReference>
<dbReference type="HAMAP" id="MF_01870">
    <property type="entry name" value="ArnD"/>
    <property type="match status" value="1"/>
</dbReference>
<dbReference type="InterPro" id="IPR023557">
    <property type="entry name" value="ArnD"/>
</dbReference>
<dbReference type="InterPro" id="IPR011330">
    <property type="entry name" value="Glyco_hydro/deAcase_b/a-brl"/>
</dbReference>
<dbReference type="InterPro" id="IPR002509">
    <property type="entry name" value="NODB_dom"/>
</dbReference>
<dbReference type="Pfam" id="PF01522">
    <property type="entry name" value="Polysacc_deac_1"/>
    <property type="match status" value="1"/>
</dbReference>
<dbReference type="SUPFAM" id="SSF88713">
    <property type="entry name" value="Glycoside hydrolase/deacetylase"/>
    <property type="match status" value="1"/>
</dbReference>
<dbReference type="PROSITE" id="PS51677">
    <property type="entry name" value="NODB"/>
    <property type="match status" value="1"/>
</dbReference>
<accession>Q8D340</accession>
<reference key="1">
    <citation type="journal article" date="2002" name="Nat. Genet.">
        <title>Genome sequence of the endocellular obligate symbiont of tsetse flies, Wigglesworthia glossinidia.</title>
        <authorList>
            <person name="Akman L."/>
            <person name="Yamashita A."/>
            <person name="Watanabe H."/>
            <person name="Oshima K."/>
            <person name="Shiba T."/>
            <person name="Hattori M."/>
            <person name="Aksoy S."/>
        </authorList>
    </citation>
    <scope>NUCLEOTIDE SEQUENCE [LARGE SCALE GENOMIC DNA]</scope>
</reference>
<gene>
    <name evidence="1" type="primary">arnD</name>
    <name type="ordered locus">WIGBR1610</name>
</gene>
<protein>
    <recommendedName>
        <fullName evidence="1">Probable 4-deoxy-4-formamido-L-arabinose-phosphoundecaprenol deformylase ArnD</fullName>
        <ecNumber evidence="1">3.5.1.n3</ecNumber>
    </recommendedName>
</protein>
<name>ARND_WIGBR</name>
<sequence length="286" mass="33430">MGTKLGVPNLWEILNKKKIKATFFFTVGPDNMGRHFWRLIKPKFLFKMFRINPFKIYGLNILRSGFIGKGKNIGKICKNEIKSASKDHEIGLHAWDHFSWQTWINMFSKKKIIKHINLGKNALQHIIKYPVTCFASPGWRTNEYVLRTLKNNFNFSYNSDCRGSNLFFPYLGDGKIGSLQIPVTLPTFDEVINIKTTIKKYNSFIIKLIKTQLNFSVYTIHAEIEGMKYKKEFEEFLNIAINEGINFCRLKDLIPKEIENIPIYKINHKTIPGRDGWIAYQQKIIK</sequence>
<proteinExistence type="inferred from homology"/>
<organism>
    <name type="scientific">Wigglesworthia glossinidia brevipalpis</name>
    <dbReference type="NCBI Taxonomy" id="36870"/>
    <lineage>
        <taxon>Bacteria</taxon>
        <taxon>Pseudomonadati</taxon>
        <taxon>Pseudomonadota</taxon>
        <taxon>Gammaproteobacteria</taxon>
        <taxon>Enterobacterales</taxon>
        <taxon>Erwiniaceae</taxon>
        <taxon>Wigglesworthia</taxon>
    </lineage>
</organism>
<evidence type="ECO:0000255" key="1">
    <source>
        <dbReference type="HAMAP-Rule" id="MF_01870"/>
    </source>
</evidence>
<comment type="function">
    <text evidence="1">Catalyzes the deformylation of 4-deoxy-4-formamido-L-arabinose-phosphoundecaprenol to 4-amino-4-deoxy-L-arabinose-phosphoundecaprenol. The modified arabinose is attached to lipid A and is required for resistance to polymyxin and cationic antimicrobial peptides.</text>
</comment>
<comment type="catalytic activity">
    <reaction evidence="1">
        <text>4-deoxy-4-formamido-alpha-L-arabinopyranosyl di-trans,octa-cis-undecaprenyl phosphate + H2O = 4-amino-4-deoxy-alpha-L-arabinopyranosyl di-trans,octa-cis-undecaprenyl phosphate + formate</text>
        <dbReference type="Rhea" id="RHEA:27734"/>
        <dbReference type="ChEBI" id="CHEBI:15377"/>
        <dbReference type="ChEBI" id="CHEBI:15740"/>
        <dbReference type="ChEBI" id="CHEBI:58909"/>
        <dbReference type="ChEBI" id="CHEBI:60463"/>
        <dbReference type="EC" id="3.5.1.n3"/>
    </reaction>
</comment>
<comment type="pathway">
    <text evidence="1">Glycolipid biosynthesis; 4-amino-4-deoxy-alpha-L-arabinose undecaprenyl phosphate biosynthesis; 4-amino-4-deoxy-alpha-L-arabinose undecaprenyl phosphate from UDP-4-deoxy-4-formamido-beta-L-arabinose and undecaprenyl phosphate: step 2/2.</text>
</comment>
<comment type="pathway">
    <text evidence="1">Bacterial outer membrane biogenesis; lipopolysaccharide biosynthesis.</text>
</comment>
<comment type="similarity">
    <text evidence="1">Belongs to the polysaccharide deacetylase family. ArnD deformylase subfamily.</text>
</comment>
<feature type="chain" id="PRO_0000383549" description="Probable 4-deoxy-4-formamido-L-arabinose-phosphoundecaprenol deformylase ArnD">
    <location>
        <begin position="1"/>
        <end position="286"/>
    </location>
</feature>
<feature type="domain" description="NodB homology" evidence="1">
    <location>
        <begin position="1"/>
        <end position="248"/>
    </location>
</feature>
<keyword id="KW-0046">Antibiotic resistance</keyword>
<keyword id="KW-0378">Hydrolase</keyword>
<keyword id="KW-0441">Lipid A biosynthesis</keyword>
<keyword id="KW-0444">Lipid biosynthesis</keyword>
<keyword id="KW-0443">Lipid metabolism</keyword>
<keyword id="KW-0448">Lipopolysaccharide biosynthesis</keyword>
<keyword id="KW-1185">Reference proteome</keyword>